<protein>
    <recommendedName>
        <fullName>Testis-specific gene 13 protein</fullName>
    </recommendedName>
</protein>
<feature type="chain" id="PRO_0000286343" description="Testis-specific gene 13 protein">
    <location>
        <begin position="1"/>
        <end position="272"/>
    </location>
</feature>
<reference key="1">
    <citation type="submission" date="2005-08" db="EMBL/GenBank/DDBJ databases">
        <authorList>
            <consortium name="NIH - Mammalian Gene Collection (MGC) project"/>
        </authorList>
    </citation>
    <scope>NUCLEOTIDE SEQUENCE [LARGE SCALE MRNA]</scope>
    <source>
        <strain>Crossbred X Angus</strain>
        <tissue>Liver</tissue>
    </source>
</reference>
<comment type="sequence caution" evidence="1">
    <conflict type="frameshift">
        <sequence resource="EMBL-CDS" id="AAI02598"/>
    </conflict>
</comment>
<organism>
    <name type="scientific">Bos taurus</name>
    <name type="common">Bovine</name>
    <dbReference type="NCBI Taxonomy" id="9913"/>
    <lineage>
        <taxon>Eukaryota</taxon>
        <taxon>Metazoa</taxon>
        <taxon>Chordata</taxon>
        <taxon>Craniata</taxon>
        <taxon>Vertebrata</taxon>
        <taxon>Euteleostomi</taxon>
        <taxon>Mammalia</taxon>
        <taxon>Eutheria</taxon>
        <taxon>Laurasiatheria</taxon>
        <taxon>Artiodactyla</taxon>
        <taxon>Ruminantia</taxon>
        <taxon>Pecora</taxon>
        <taxon>Bovidae</taxon>
        <taxon>Bovinae</taxon>
        <taxon>Bos</taxon>
    </lineage>
</organism>
<keyword id="KW-1185">Reference proteome</keyword>
<dbReference type="EMBL" id="BC102597">
    <property type="protein sequence ID" value="AAI02598.1"/>
    <property type="status" value="ALT_FRAME"/>
    <property type="molecule type" value="mRNA"/>
</dbReference>
<dbReference type="RefSeq" id="NP_001069894.2">
    <property type="nucleotide sequence ID" value="NM_001076426.2"/>
</dbReference>
<dbReference type="FunCoup" id="Q3T028">
    <property type="interactions" value="107"/>
</dbReference>
<dbReference type="STRING" id="9913.ENSBTAP00000026883"/>
<dbReference type="PaxDb" id="9913-ENSBTAP00000026883"/>
<dbReference type="Ensembl" id="ENSBTAT00000026883.5">
    <property type="protein sequence ID" value="ENSBTAP00000026883.4"/>
    <property type="gene ID" value="ENSBTAG00000020183.7"/>
</dbReference>
<dbReference type="GeneID" id="616493"/>
<dbReference type="KEGG" id="bta:616493"/>
<dbReference type="CTD" id="114960"/>
<dbReference type="VEuPathDB" id="HostDB:ENSBTAG00000020183"/>
<dbReference type="VGNC" id="VGNC:36417">
    <property type="gene designation" value="TSGA13"/>
</dbReference>
<dbReference type="eggNOG" id="ENOG502S9MD">
    <property type="taxonomic scope" value="Eukaryota"/>
</dbReference>
<dbReference type="GeneTree" id="ENSGT00390000009822"/>
<dbReference type="HOGENOM" id="CLU_088610_0_0_1"/>
<dbReference type="InParanoid" id="Q3T028"/>
<dbReference type="OMA" id="WIIKNAT"/>
<dbReference type="OrthoDB" id="9946729at2759"/>
<dbReference type="TreeFam" id="TF328772"/>
<dbReference type="Proteomes" id="UP000009136">
    <property type="component" value="Chromosome 4"/>
</dbReference>
<dbReference type="Bgee" id="ENSBTAG00000020183">
    <property type="expression patterns" value="Expressed in semen and 7 other cell types or tissues"/>
</dbReference>
<dbReference type="InterPro" id="IPR029241">
    <property type="entry name" value="TSGA13"/>
</dbReference>
<dbReference type="PANTHER" id="PTHR37352">
    <property type="entry name" value="TESTIS-SPECIFIC GENE 13 PROTEIN"/>
    <property type="match status" value="1"/>
</dbReference>
<dbReference type="PANTHER" id="PTHR37352:SF1">
    <property type="entry name" value="TESTIS-SPECIFIC GENE 13 PROTEIN"/>
    <property type="match status" value="1"/>
</dbReference>
<dbReference type="Pfam" id="PF14994">
    <property type="entry name" value="TSGA13"/>
    <property type="match status" value="1"/>
</dbReference>
<sequence length="272" mass="31827">MGQRRQTKSQHAKPRTFRTSPVMFEKEIFFDSDEIIDAVGQSKFVLKNLHHYTVHPNLAQYYEPLKPTALQKFLARNRKIQSFTLKVIEYDQDKTLLILTNNPLPCPIDHQGKDVTPKYFSNELLLKESHQHKPTENFFLPLMPQKKNLRSGLKPVFPLMLLEDTKSKREQWFRFSTDNDFKSEGKYSKVYTLRQQKKMYPQLTFASVCKKYMKNDVSKKSGSDSPTSQMIWEPLTLSSLLEKKPTRTAPGESEFRNGRAQQWFIKSATVIK</sequence>
<accession>Q3T028</accession>
<name>TSG13_BOVIN</name>
<evidence type="ECO:0000305" key="1"/>
<proteinExistence type="evidence at transcript level"/>
<gene>
    <name type="primary">TSGA13</name>
</gene>